<evidence type="ECO:0000250" key="1"/>
<evidence type="ECO:0000255" key="2"/>
<evidence type="ECO:0000305" key="3"/>
<keyword id="KW-0012">Acyltransferase</keyword>
<keyword id="KW-0903">Direct protein sequencing</keyword>
<keyword id="KW-0256">Endoplasmic reticulum</keyword>
<keyword id="KW-0443">Lipid metabolism</keyword>
<keyword id="KW-0472">Membrane</keyword>
<keyword id="KW-0663">Pyridoxal phosphate</keyword>
<keyword id="KW-1185">Reference proteome</keyword>
<keyword id="KW-0746">Sphingolipid metabolism</keyword>
<keyword id="KW-0808">Transferase</keyword>
<keyword id="KW-0812">Transmembrane</keyword>
<keyword id="KW-1133">Transmembrane helix</keyword>
<protein>
    <recommendedName>
        <fullName>Serine palmitoyltransferase 2</fullName>
        <ecNumber>2.3.1.50</ecNumber>
    </recommendedName>
    <alternativeName>
        <fullName>Long chain base biosynthesis protein 2</fullName>
        <shortName>LCB 2</shortName>
    </alternativeName>
    <alternativeName>
        <fullName>Serine-palmitoyl-CoA transferase 2</fullName>
        <shortName>SPT 2</shortName>
        <shortName>SPT2</shortName>
    </alternativeName>
</protein>
<name>SPTC2_DICDI</name>
<accession>Q54EX5</accession>
<organism>
    <name type="scientific">Dictyostelium discoideum</name>
    <name type="common">Social amoeba</name>
    <dbReference type="NCBI Taxonomy" id="44689"/>
    <lineage>
        <taxon>Eukaryota</taxon>
        <taxon>Amoebozoa</taxon>
        <taxon>Evosea</taxon>
        <taxon>Eumycetozoa</taxon>
        <taxon>Dictyostelia</taxon>
        <taxon>Dictyosteliales</taxon>
        <taxon>Dictyosteliaceae</taxon>
        <taxon>Dictyostelium</taxon>
    </lineage>
</organism>
<sequence>MEDKEDVENVDDVGYLPILFLYIAYAFIIFNGKLAEFIGKLKGERYLHTPEGYAPLFVEFEYFYQRRMYGRIKDAWDRPINSIAGAWIDVMPRASKHYSQRLELTGGKTIKCLNLGSYNYLGFAQNEGPVADKVIDSIYKYGVYTGSTSAEVGLSEPQRDLENLTARFVGKEDAIVFEMGFATNSGTLPALIGKGGLIISDSLNHASLATGCKNTGCKVKVFRHNDSKHLEEVIRESIIQGQPRTHRPWTMILIIIEGIYSMEGEVANLPEILAIKKKYKCYLYIDEAHSIGALGKTGRGIVDYYGIDPKEIDILMGTYTKSFGAIGGYVASDKSLIDHLRQSSFSQVYANSMSPVCAVQALEALRVIMGEDGTDTGAKKLKQLHDNSNYFREKIREMGFVILGNKDSPVIPLMLFNPAKLSAFSRLCLEKHIAVVVVGYPATPLTEPRTRFCISASHTIEDLDWALRQIDEIGDLITLKFHKGKYLKSK</sequence>
<feature type="chain" id="PRO_0000327871" description="Serine palmitoyltransferase 2">
    <location>
        <begin position="1"/>
        <end position="490"/>
    </location>
</feature>
<feature type="transmembrane region" description="Helical" evidence="2">
    <location>
        <begin position="10"/>
        <end position="30"/>
    </location>
</feature>
<feature type="modified residue" description="N6-(pyridoxal phosphate)lysine" evidence="1">
    <location>
        <position position="321"/>
    </location>
</feature>
<gene>
    <name type="primary">sptB</name>
    <name type="ORF">DDB_G0291283</name>
</gene>
<proteinExistence type="evidence at protein level"/>
<dbReference type="EC" id="2.3.1.50"/>
<dbReference type="EMBL" id="AAFI02000177">
    <property type="protein sequence ID" value="EAL61625.1"/>
    <property type="molecule type" value="Genomic_DNA"/>
</dbReference>
<dbReference type="RefSeq" id="XP_635115.1">
    <property type="nucleotide sequence ID" value="XM_630023.1"/>
</dbReference>
<dbReference type="SMR" id="Q54EX5"/>
<dbReference type="FunCoup" id="Q54EX5">
    <property type="interactions" value="157"/>
</dbReference>
<dbReference type="STRING" id="44689.Q54EX5"/>
<dbReference type="PaxDb" id="44689-DDB0232041"/>
<dbReference type="EnsemblProtists" id="EAL61625">
    <property type="protein sequence ID" value="EAL61625"/>
    <property type="gene ID" value="DDB_G0291283"/>
</dbReference>
<dbReference type="GeneID" id="8628062"/>
<dbReference type="KEGG" id="ddi:DDB_G0291283"/>
<dbReference type="dictyBase" id="DDB_G0291283">
    <property type="gene designation" value="sptB"/>
</dbReference>
<dbReference type="VEuPathDB" id="AmoebaDB:DDB_G0291283"/>
<dbReference type="eggNOG" id="KOG1357">
    <property type="taxonomic scope" value="Eukaryota"/>
</dbReference>
<dbReference type="HOGENOM" id="CLU_015846_7_0_1"/>
<dbReference type="InParanoid" id="Q54EX5"/>
<dbReference type="OMA" id="QPRANGC"/>
<dbReference type="PhylomeDB" id="Q54EX5"/>
<dbReference type="UniPathway" id="UPA00222"/>
<dbReference type="PRO" id="PR:Q54EX5"/>
<dbReference type="Proteomes" id="UP000002195">
    <property type="component" value="Chromosome 6"/>
</dbReference>
<dbReference type="GO" id="GO:0005789">
    <property type="term" value="C:endoplasmic reticulum membrane"/>
    <property type="evidence" value="ECO:0007669"/>
    <property type="project" value="UniProtKB-SubCell"/>
</dbReference>
<dbReference type="GO" id="GO:0017059">
    <property type="term" value="C:serine palmitoyltransferase complex"/>
    <property type="evidence" value="ECO:0000250"/>
    <property type="project" value="dictyBase"/>
</dbReference>
<dbReference type="GO" id="GO:0030170">
    <property type="term" value="F:pyridoxal phosphate binding"/>
    <property type="evidence" value="ECO:0007669"/>
    <property type="project" value="InterPro"/>
</dbReference>
<dbReference type="GO" id="GO:0004758">
    <property type="term" value="F:serine C-palmitoyltransferase activity"/>
    <property type="evidence" value="ECO:0000250"/>
    <property type="project" value="dictyBase"/>
</dbReference>
<dbReference type="GO" id="GO:0046513">
    <property type="term" value="P:ceramide biosynthetic process"/>
    <property type="evidence" value="ECO:0000318"/>
    <property type="project" value="GO_Central"/>
</dbReference>
<dbReference type="GO" id="GO:0030148">
    <property type="term" value="P:sphingolipid biosynthetic process"/>
    <property type="evidence" value="ECO:0000250"/>
    <property type="project" value="dictyBase"/>
</dbReference>
<dbReference type="GO" id="GO:0046512">
    <property type="term" value="P:sphingosine biosynthetic process"/>
    <property type="evidence" value="ECO:0000318"/>
    <property type="project" value="GO_Central"/>
</dbReference>
<dbReference type="CDD" id="cd06454">
    <property type="entry name" value="KBL_like"/>
    <property type="match status" value="1"/>
</dbReference>
<dbReference type="Gene3D" id="3.90.1150.10">
    <property type="entry name" value="Aspartate Aminotransferase, domain 1"/>
    <property type="match status" value="1"/>
</dbReference>
<dbReference type="Gene3D" id="3.40.640.10">
    <property type="entry name" value="Type I PLP-dependent aspartate aminotransferase-like (Major domain)"/>
    <property type="match status" value="1"/>
</dbReference>
<dbReference type="InterPro" id="IPR001917">
    <property type="entry name" value="Aminotrans_II_pyridoxalP_BS"/>
</dbReference>
<dbReference type="InterPro" id="IPR004839">
    <property type="entry name" value="Aminotransferase_I/II_large"/>
</dbReference>
<dbReference type="InterPro" id="IPR050087">
    <property type="entry name" value="AON_synthase_class-II"/>
</dbReference>
<dbReference type="InterPro" id="IPR015424">
    <property type="entry name" value="PyrdxlP-dep_Trfase"/>
</dbReference>
<dbReference type="InterPro" id="IPR015421">
    <property type="entry name" value="PyrdxlP-dep_Trfase_major"/>
</dbReference>
<dbReference type="InterPro" id="IPR015422">
    <property type="entry name" value="PyrdxlP-dep_Trfase_small"/>
</dbReference>
<dbReference type="PANTHER" id="PTHR13693">
    <property type="entry name" value="CLASS II AMINOTRANSFERASE/8-AMINO-7-OXONONANOATE SYNTHASE"/>
    <property type="match status" value="1"/>
</dbReference>
<dbReference type="PANTHER" id="PTHR13693:SF3">
    <property type="entry name" value="LD36009P"/>
    <property type="match status" value="1"/>
</dbReference>
<dbReference type="Pfam" id="PF00155">
    <property type="entry name" value="Aminotran_1_2"/>
    <property type="match status" value="1"/>
</dbReference>
<dbReference type="SUPFAM" id="SSF53383">
    <property type="entry name" value="PLP-dependent transferases"/>
    <property type="match status" value="1"/>
</dbReference>
<dbReference type="PROSITE" id="PS00599">
    <property type="entry name" value="AA_TRANSFER_CLASS_2"/>
    <property type="match status" value="1"/>
</dbReference>
<comment type="function">
    <text evidence="1">Catalytic subunit of serine palmitoyltransferase (SPT), which catalyzes the committed step in the synthesis of sphingolipids, the condensation of serine with palmitoyl CoA to form the long chain base 3-ketosphinganine.</text>
</comment>
<comment type="catalytic activity">
    <reaction>
        <text>L-serine + hexadecanoyl-CoA + H(+) = 3-oxosphinganine + CO2 + CoA</text>
        <dbReference type="Rhea" id="RHEA:14761"/>
        <dbReference type="ChEBI" id="CHEBI:15378"/>
        <dbReference type="ChEBI" id="CHEBI:16526"/>
        <dbReference type="ChEBI" id="CHEBI:33384"/>
        <dbReference type="ChEBI" id="CHEBI:57287"/>
        <dbReference type="ChEBI" id="CHEBI:57379"/>
        <dbReference type="ChEBI" id="CHEBI:58299"/>
        <dbReference type="EC" id="2.3.1.50"/>
    </reaction>
</comment>
<comment type="cofactor">
    <cofactor evidence="1">
        <name>pyridoxal 5'-phosphate</name>
        <dbReference type="ChEBI" id="CHEBI:597326"/>
    </cofactor>
</comment>
<comment type="pathway">
    <text>Lipid metabolism; sphingolipid metabolism.</text>
</comment>
<comment type="subunit">
    <text evidence="1">Forms a heterodimer with sptA.</text>
</comment>
<comment type="subcellular location">
    <subcellularLocation>
        <location evidence="1">Endoplasmic reticulum membrane</location>
        <topology evidence="1">Single-pass membrane protein</topology>
    </subcellularLocation>
</comment>
<comment type="similarity">
    <text evidence="3">Belongs to the class-II pyridoxal-phosphate-dependent aminotransferase family.</text>
</comment>
<reference key="1">
    <citation type="journal article" date="2005" name="Nature">
        <title>The genome of the social amoeba Dictyostelium discoideum.</title>
        <authorList>
            <person name="Eichinger L."/>
            <person name="Pachebat J.A."/>
            <person name="Gloeckner G."/>
            <person name="Rajandream M.A."/>
            <person name="Sucgang R."/>
            <person name="Berriman M."/>
            <person name="Song J."/>
            <person name="Olsen R."/>
            <person name="Szafranski K."/>
            <person name="Xu Q."/>
            <person name="Tunggal B."/>
            <person name="Kummerfeld S."/>
            <person name="Madera M."/>
            <person name="Konfortov B.A."/>
            <person name="Rivero F."/>
            <person name="Bankier A.T."/>
            <person name="Lehmann R."/>
            <person name="Hamlin N."/>
            <person name="Davies R."/>
            <person name="Gaudet P."/>
            <person name="Fey P."/>
            <person name="Pilcher K."/>
            <person name="Chen G."/>
            <person name="Saunders D."/>
            <person name="Sodergren E.J."/>
            <person name="Davis P."/>
            <person name="Kerhornou A."/>
            <person name="Nie X."/>
            <person name="Hall N."/>
            <person name="Anjard C."/>
            <person name="Hemphill L."/>
            <person name="Bason N."/>
            <person name="Farbrother P."/>
            <person name="Desany B."/>
            <person name="Just E."/>
            <person name="Morio T."/>
            <person name="Rost R."/>
            <person name="Churcher C.M."/>
            <person name="Cooper J."/>
            <person name="Haydock S."/>
            <person name="van Driessche N."/>
            <person name="Cronin A."/>
            <person name="Goodhead I."/>
            <person name="Muzny D.M."/>
            <person name="Mourier T."/>
            <person name="Pain A."/>
            <person name="Lu M."/>
            <person name="Harper D."/>
            <person name="Lindsay R."/>
            <person name="Hauser H."/>
            <person name="James K.D."/>
            <person name="Quiles M."/>
            <person name="Madan Babu M."/>
            <person name="Saito T."/>
            <person name="Buchrieser C."/>
            <person name="Wardroper A."/>
            <person name="Felder M."/>
            <person name="Thangavelu M."/>
            <person name="Johnson D."/>
            <person name="Knights A."/>
            <person name="Loulseged H."/>
            <person name="Mungall K.L."/>
            <person name="Oliver K."/>
            <person name="Price C."/>
            <person name="Quail M.A."/>
            <person name="Urushihara H."/>
            <person name="Hernandez J."/>
            <person name="Rabbinowitsch E."/>
            <person name="Steffen D."/>
            <person name="Sanders M."/>
            <person name="Ma J."/>
            <person name="Kohara Y."/>
            <person name="Sharp S."/>
            <person name="Simmonds M.N."/>
            <person name="Spiegler S."/>
            <person name="Tivey A."/>
            <person name="Sugano S."/>
            <person name="White B."/>
            <person name="Walker D."/>
            <person name="Woodward J.R."/>
            <person name="Winckler T."/>
            <person name="Tanaka Y."/>
            <person name="Shaulsky G."/>
            <person name="Schleicher M."/>
            <person name="Weinstock G.M."/>
            <person name="Rosenthal A."/>
            <person name="Cox E.C."/>
            <person name="Chisholm R.L."/>
            <person name="Gibbs R.A."/>
            <person name="Loomis W.F."/>
            <person name="Platzer M."/>
            <person name="Kay R.R."/>
            <person name="Williams J.G."/>
            <person name="Dear P.H."/>
            <person name="Noegel A.A."/>
            <person name="Barrell B.G."/>
            <person name="Kuspa A."/>
        </authorList>
    </citation>
    <scope>NUCLEOTIDE SEQUENCE [LARGE SCALE GENOMIC DNA]</scope>
    <source>
        <strain>AX4</strain>
    </source>
</reference>
<reference key="2">
    <citation type="submission" date="2010-01" db="UniProtKB">
        <authorList>
            <person name="Bienvenut W.V."/>
            <person name="Veltman D.M."/>
            <person name="Insall R.H."/>
        </authorList>
    </citation>
    <scope>PROTEIN SEQUENCE OF 160-167 AND 300-334</scope>
    <scope>IDENTIFICATION BY MASS SPECTROMETRY</scope>
</reference>